<keyword id="KW-0007">Acetylation</keyword>
<keyword id="KW-0020">Allergen</keyword>
<keyword id="KW-0106">Calcium</keyword>
<keyword id="KW-0903">Direct protein sequencing</keyword>
<keyword id="KW-0479">Metal-binding</keyword>
<keyword id="KW-0514">Muscle protein</keyword>
<keyword id="KW-0677">Repeat</keyword>
<proteinExistence type="evidence at protein level"/>
<evidence type="ECO:0000250" key="1">
    <source>
        <dbReference type="UniProtKB" id="P02621"/>
    </source>
</evidence>
<evidence type="ECO:0000250" key="2">
    <source>
        <dbReference type="UniProtKB" id="P02622"/>
    </source>
</evidence>
<evidence type="ECO:0000250" key="3">
    <source>
        <dbReference type="UniProtKB" id="P02624"/>
    </source>
</evidence>
<evidence type="ECO:0000255" key="4"/>
<evidence type="ECO:0000255" key="5">
    <source>
        <dbReference type="PROSITE-ProRule" id="PRU00448"/>
    </source>
</evidence>
<evidence type="ECO:0000269" key="6">
    <source>
    </source>
</evidence>
<evidence type="ECO:0000303" key="7">
    <source>
    </source>
</evidence>
<evidence type="ECO:0000305" key="8"/>
<accession>P86766</accession>
<feature type="chain" id="PRO_0000399426" description="Parvalbumin beta 3">
    <location>
        <begin position="1"/>
        <end position="108"/>
    </location>
</feature>
<feature type="domain" description="EF-hand 1" evidence="5">
    <location>
        <begin position="38"/>
        <end position="73"/>
    </location>
</feature>
<feature type="domain" description="EF-hand 2" evidence="5">
    <location>
        <begin position="77"/>
        <end position="108"/>
    </location>
</feature>
<feature type="binding site" evidence="1 5">
    <location>
        <position position="51"/>
    </location>
    <ligand>
        <name>Ca(2+)</name>
        <dbReference type="ChEBI" id="CHEBI:29108"/>
        <label>1</label>
    </ligand>
</feature>
<feature type="binding site" evidence="1 5">
    <location>
        <position position="53"/>
    </location>
    <ligand>
        <name>Ca(2+)</name>
        <dbReference type="ChEBI" id="CHEBI:29108"/>
        <label>1</label>
    </ligand>
</feature>
<feature type="binding site" evidence="1 5">
    <location>
        <position position="55"/>
    </location>
    <ligand>
        <name>Ca(2+)</name>
        <dbReference type="ChEBI" id="CHEBI:29108"/>
        <label>1</label>
    </ligand>
</feature>
<feature type="binding site" evidence="1">
    <location>
        <position position="57"/>
    </location>
    <ligand>
        <name>Ca(2+)</name>
        <dbReference type="ChEBI" id="CHEBI:29108"/>
        <label>1</label>
    </ligand>
</feature>
<feature type="binding site" evidence="1">
    <location>
        <position position="59"/>
    </location>
    <ligand>
        <name>Ca(2+)</name>
        <dbReference type="ChEBI" id="CHEBI:29108"/>
        <label>1</label>
    </ligand>
</feature>
<feature type="binding site" evidence="1 5">
    <location>
        <position position="62"/>
    </location>
    <ligand>
        <name>Ca(2+)</name>
        <dbReference type="ChEBI" id="CHEBI:29108"/>
        <label>1</label>
    </ligand>
</feature>
<feature type="binding site" evidence="1 5">
    <location>
        <position position="90"/>
    </location>
    <ligand>
        <name>Ca(2+)</name>
        <dbReference type="ChEBI" id="CHEBI:29108"/>
        <label>2</label>
    </ligand>
</feature>
<feature type="binding site" evidence="1 5">
    <location>
        <position position="92"/>
    </location>
    <ligand>
        <name>Ca(2+)</name>
        <dbReference type="ChEBI" id="CHEBI:29108"/>
        <label>2</label>
    </ligand>
</feature>
<feature type="binding site" evidence="1 5">
    <location>
        <position position="94"/>
    </location>
    <ligand>
        <name>Ca(2+)</name>
        <dbReference type="ChEBI" id="CHEBI:29108"/>
        <label>2</label>
    </ligand>
</feature>
<feature type="binding site" evidence="1">
    <location>
        <position position="96"/>
    </location>
    <ligand>
        <name>Ca(2+)</name>
        <dbReference type="ChEBI" id="CHEBI:29108"/>
        <label>2</label>
    </ligand>
</feature>
<feature type="binding site" evidence="1 5">
    <location>
        <position position="101"/>
    </location>
    <ligand>
        <name>Ca(2+)</name>
        <dbReference type="ChEBI" id="CHEBI:29108"/>
        <label>2</label>
    </ligand>
</feature>
<feature type="modified residue" description="N-acetylalanine" evidence="6">
    <location>
        <position position="1"/>
    </location>
</feature>
<feature type="unsure residue" description="I or L" evidence="6">
    <location>
        <position position="5"/>
    </location>
</feature>
<feature type="unsure residue" description="L or I" evidence="6">
    <location>
        <position position="6"/>
    </location>
</feature>
<feature type="unsure residue" description="I or L" evidence="6">
    <location>
        <position position="11"/>
    </location>
</feature>
<feature type="unsure residue" description="L or I" evidence="6">
    <location>
        <position position="15"/>
    </location>
</feature>
<feature type="unsure residue" description="K or Q" evidence="6">
    <location>
        <position position="16"/>
    </location>
</feature>
<feature type="unsure residue" description="K or Q" evidence="6">
    <location>
        <position position="27"/>
    </location>
</feature>
<feature type="unsure residue" description="K or Q" evidence="6">
    <location>
        <position position="32"/>
    </location>
</feature>
<feature type="unsure residue" description="L or I" evidence="6">
    <location>
        <position position="35"/>
    </location>
</feature>
<feature type="unsure residue" description="K or Q" evidence="6">
    <location>
        <position position="38"/>
    </location>
</feature>
<feature type="unsure residue" description="I or L" evidence="6">
    <location>
        <position position="43"/>
    </location>
</feature>
<feature type="unsure residue" description="K or Q" evidence="6">
    <location>
        <position position="44"/>
    </location>
</feature>
<feature type="unsure residue" description="K or Q" evidence="6">
    <location>
        <position position="45"/>
    </location>
</feature>
<feature type="unsure residue" description="I or L" evidence="6">
    <location>
        <position position="50"/>
    </location>
</feature>
<feature type="unsure residue" description="Q or K" evidence="6">
    <location>
        <position position="52"/>
    </location>
</feature>
<feature type="unsure residue" description="K or Q" evidence="6">
    <location>
        <position position="54"/>
    </location>
</feature>
<feature type="unsure residue" description="I or L" evidence="6">
    <location>
        <position position="58"/>
    </location>
</feature>
<feature type="unsure residue" description="L or I" evidence="6">
    <location>
        <position position="63"/>
    </location>
</feature>
<feature type="unsure residue" description="K or Q" evidence="6">
    <location>
        <position position="64"/>
    </location>
</feature>
<feature type="unsure residue" description="L or I" evidence="6">
    <location>
        <position position="65"/>
    </location>
</feature>
<feature type="unsure residue" description="L or I" evidence="6">
    <location>
        <position position="67"/>
    </location>
</feature>
<feature type="unsure residue" description="Q or K" evidence="6">
    <location>
        <position position="68"/>
    </location>
</feature>
<feature type="unsure residue" description="L or I" evidence="6">
    <location>
        <position position="77"/>
    </location>
</feature>
<feature type="unsure residue" description="K or Q" evidence="6">
    <location>
        <position position="83"/>
    </location>
</feature>
<feature type="unsure residue" description="L or I" evidence="6">
    <location>
        <position position="86"/>
    </location>
</feature>
<feature type="unsure residue" description="K or Q" evidence="6">
    <location>
        <position position="87"/>
    </location>
</feature>
<feature type="unsure residue" description="I or L" evidence="6">
    <location>
        <position position="97"/>
    </location>
</feature>
<feature type="unsure residue" description="L or I" evidence="6">
    <location>
        <position position="105"/>
    </location>
</feature>
<feature type="unsure residue" description="K or Q" evidence="6">
    <location>
        <position position="107"/>
    </location>
</feature>
<protein>
    <recommendedName>
        <fullName evidence="7">Parvalbumin beta 3</fullName>
    </recommendedName>
</protein>
<reference evidence="8" key="1">
    <citation type="journal article" date="2010" name="J. Proteome Res.">
        <title>Extensive de novo sequencing of new parvalbumin isoforms using a novel combination of bottom-up proteomics, accurate molecular mass measurement by FTICR-MS, and selected MS/MS ion monitoring.</title>
        <authorList>
            <person name="Carrera M."/>
            <person name="Canas B."/>
            <person name="Vazquez J."/>
            <person name="Gallardo J.M."/>
        </authorList>
    </citation>
    <scope>PROTEIN SEQUENCE</scope>
    <scope>MASS SPECTROMETRY</scope>
    <scope>ACETYLATION AT ALA-1</scope>
    <source>
        <tissue evidence="6">Muscle</tissue>
    </source>
</reference>
<organism>
    <name type="scientific">Merluccius merluccius</name>
    <name type="common">European hake</name>
    <dbReference type="NCBI Taxonomy" id="8063"/>
    <lineage>
        <taxon>Eukaryota</taxon>
        <taxon>Metazoa</taxon>
        <taxon>Chordata</taxon>
        <taxon>Craniata</taxon>
        <taxon>Vertebrata</taxon>
        <taxon>Euteleostomi</taxon>
        <taxon>Actinopterygii</taxon>
        <taxon>Neopterygii</taxon>
        <taxon>Teleostei</taxon>
        <taxon>Neoteleostei</taxon>
        <taxon>Acanthomorphata</taxon>
        <taxon>Zeiogadaria</taxon>
        <taxon>Gadariae</taxon>
        <taxon>Gadiformes</taxon>
        <taxon>Gadoidei</taxon>
        <taxon>Merlucciidae</taxon>
        <taxon>Merluccius</taxon>
    </lineage>
</organism>
<sequence length="108" mass="11345">AFSGILAEADIAAALKACEAAGTFNYKAFFAKVGLTGKSADDIKKAFFVIDQDKSGFIEEDELKLFLQVFSAGARALTDDETKAFLKAGDSDGDGAIGVEEWAALVKA</sequence>
<comment type="function">
    <text evidence="2 3">In muscle, parvalbumin is thought to be involved in relaxation after contraction. It binds two calcium ions (By similarity).</text>
</comment>
<comment type="mass spectrometry" mass="11379.803" error="0.0178" method="Electrospray" evidence="6"/>
<comment type="miscellaneous">
    <text evidence="2 6">Is regarded as an important allergen.</text>
</comment>
<comment type="miscellaneous">
    <text evidence="6">On the 2D-gel the determined pI of this protein is: 4.19, its MW is: 11.38 kDa.</text>
</comment>
<comment type="similarity">
    <text evidence="4">Belongs to the parvalbumin family.</text>
</comment>
<name>PRVB3_MERME</name>
<dbReference type="SMR" id="P86766"/>
<dbReference type="Allergome" id="7643">
    <property type="allergen name" value="Mer mr 1"/>
</dbReference>
<dbReference type="iPTMnet" id="P86766"/>
<dbReference type="GO" id="GO:0005737">
    <property type="term" value="C:cytoplasm"/>
    <property type="evidence" value="ECO:0007669"/>
    <property type="project" value="TreeGrafter"/>
</dbReference>
<dbReference type="GO" id="GO:0005509">
    <property type="term" value="F:calcium ion binding"/>
    <property type="evidence" value="ECO:0007669"/>
    <property type="project" value="InterPro"/>
</dbReference>
<dbReference type="CDD" id="cd16255">
    <property type="entry name" value="EFh_parvalbumin_beta"/>
    <property type="match status" value="1"/>
</dbReference>
<dbReference type="FunFam" id="1.10.238.10:FF:000060">
    <property type="entry name" value="Parvalbumin, thymic"/>
    <property type="match status" value="1"/>
</dbReference>
<dbReference type="Gene3D" id="1.10.238.10">
    <property type="entry name" value="EF-hand"/>
    <property type="match status" value="1"/>
</dbReference>
<dbReference type="InterPro" id="IPR011992">
    <property type="entry name" value="EF-hand-dom_pair"/>
</dbReference>
<dbReference type="InterPro" id="IPR018247">
    <property type="entry name" value="EF_Hand_1_Ca_BS"/>
</dbReference>
<dbReference type="InterPro" id="IPR002048">
    <property type="entry name" value="EF_hand_dom"/>
</dbReference>
<dbReference type="InterPro" id="IPR008080">
    <property type="entry name" value="Parvalbumin"/>
</dbReference>
<dbReference type="PANTHER" id="PTHR11653:SF12">
    <property type="entry name" value="PARVALBUMIN"/>
    <property type="match status" value="1"/>
</dbReference>
<dbReference type="PANTHER" id="PTHR11653">
    <property type="entry name" value="PARVALBUMIN ALPHA"/>
    <property type="match status" value="1"/>
</dbReference>
<dbReference type="Pfam" id="PF13499">
    <property type="entry name" value="EF-hand_7"/>
    <property type="match status" value="1"/>
</dbReference>
<dbReference type="PRINTS" id="PR01697">
    <property type="entry name" value="PARVALBUMIN"/>
</dbReference>
<dbReference type="SMART" id="SM00054">
    <property type="entry name" value="EFh"/>
    <property type="match status" value="2"/>
</dbReference>
<dbReference type="SUPFAM" id="SSF47473">
    <property type="entry name" value="EF-hand"/>
    <property type="match status" value="1"/>
</dbReference>
<dbReference type="PROSITE" id="PS00018">
    <property type="entry name" value="EF_HAND_1"/>
    <property type="match status" value="2"/>
</dbReference>
<dbReference type="PROSITE" id="PS50222">
    <property type="entry name" value="EF_HAND_2"/>
    <property type="match status" value="2"/>
</dbReference>